<protein>
    <recommendedName>
        <fullName evidence="1">ATP synthase subunit c, chloroplastic</fullName>
    </recommendedName>
    <alternativeName>
        <fullName evidence="1">ATP synthase F(0) sector subunit c</fullName>
    </alternativeName>
    <alternativeName>
        <fullName evidence="1">ATPase subunit III</fullName>
    </alternativeName>
    <alternativeName>
        <fullName evidence="1">F-type ATPase subunit c</fullName>
        <shortName evidence="1">F-ATPase subunit c</shortName>
    </alternativeName>
    <alternativeName>
        <fullName evidence="1">Lipid-binding protein</fullName>
    </alternativeName>
</protein>
<feature type="chain" id="PRO_0000362958" description="ATP synthase subunit c, chloroplastic">
    <location>
        <begin position="1"/>
        <end position="81"/>
    </location>
</feature>
<feature type="transmembrane region" description="Helical" evidence="1">
    <location>
        <begin position="3"/>
        <end position="23"/>
    </location>
</feature>
<feature type="transmembrane region" description="Helical" evidence="1">
    <location>
        <begin position="57"/>
        <end position="77"/>
    </location>
</feature>
<feature type="site" description="Reversibly protonated during proton transport" evidence="1">
    <location>
        <position position="61"/>
    </location>
</feature>
<dbReference type="EMBL" id="EF489041">
    <property type="protein sequence ID" value="ABO36689.1"/>
    <property type="molecule type" value="Genomic_DNA"/>
</dbReference>
<dbReference type="RefSeq" id="YP_001109486.1">
    <property type="nucleotide sequence ID" value="NC_009143.1"/>
</dbReference>
<dbReference type="SMR" id="A4GYP5"/>
<dbReference type="FunCoup" id="A4GYP5">
    <property type="interactions" value="133"/>
</dbReference>
<dbReference type="STRING" id="3694.A4GYP5"/>
<dbReference type="EnsemblPlants" id="Potri.013G138490.1.v4.1">
    <property type="protein sequence ID" value="Potri.013G138490.1.v4.1"/>
    <property type="gene ID" value="Potri.013G138490.v4.1"/>
</dbReference>
<dbReference type="GeneID" id="4929640"/>
<dbReference type="Gramene" id="Potri.013G138490.1.v4.1">
    <property type="protein sequence ID" value="Potri.013G138490.1.v4.1"/>
    <property type="gene ID" value="Potri.013G138490.v4.1"/>
</dbReference>
<dbReference type="KEGG" id="pop:4929640"/>
<dbReference type="eggNOG" id="KOG0232">
    <property type="taxonomic scope" value="Eukaryota"/>
</dbReference>
<dbReference type="InParanoid" id="A4GYP5"/>
<dbReference type="OMA" id="QPELMNE"/>
<dbReference type="OrthoDB" id="438052at2759"/>
<dbReference type="Proteomes" id="UP000006729">
    <property type="component" value="Chloroplast"/>
</dbReference>
<dbReference type="ExpressionAtlas" id="A4GYP5">
    <property type="expression patterns" value="baseline"/>
</dbReference>
<dbReference type="GO" id="GO:0009535">
    <property type="term" value="C:chloroplast thylakoid membrane"/>
    <property type="evidence" value="ECO:0007669"/>
    <property type="project" value="UniProtKB-SubCell"/>
</dbReference>
<dbReference type="GO" id="GO:0045259">
    <property type="term" value="C:proton-transporting ATP synthase complex"/>
    <property type="evidence" value="ECO:0007669"/>
    <property type="project" value="UniProtKB-KW"/>
</dbReference>
<dbReference type="GO" id="GO:0033177">
    <property type="term" value="C:proton-transporting two-sector ATPase complex, proton-transporting domain"/>
    <property type="evidence" value="ECO:0007669"/>
    <property type="project" value="InterPro"/>
</dbReference>
<dbReference type="GO" id="GO:0008289">
    <property type="term" value="F:lipid binding"/>
    <property type="evidence" value="ECO:0007669"/>
    <property type="project" value="UniProtKB-KW"/>
</dbReference>
<dbReference type="GO" id="GO:0046933">
    <property type="term" value="F:proton-transporting ATP synthase activity, rotational mechanism"/>
    <property type="evidence" value="ECO:0007669"/>
    <property type="project" value="UniProtKB-UniRule"/>
</dbReference>
<dbReference type="GO" id="GO:0015986">
    <property type="term" value="P:proton motive force-driven ATP synthesis"/>
    <property type="evidence" value="ECO:0000318"/>
    <property type="project" value="GO_Central"/>
</dbReference>
<dbReference type="CDD" id="cd18183">
    <property type="entry name" value="ATP-synt_Fo_c_ATPH"/>
    <property type="match status" value="1"/>
</dbReference>
<dbReference type="FunFam" id="1.20.20.10:FF:000001">
    <property type="entry name" value="ATP synthase subunit c, chloroplastic"/>
    <property type="match status" value="1"/>
</dbReference>
<dbReference type="Gene3D" id="1.20.20.10">
    <property type="entry name" value="F1F0 ATP synthase subunit C"/>
    <property type="match status" value="1"/>
</dbReference>
<dbReference type="HAMAP" id="MF_01396">
    <property type="entry name" value="ATP_synth_c_bact"/>
    <property type="match status" value="1"/>
</dbReference>
<dbReference type="InterPro" id="IPR005953">
    <property type="entry name" value="ATP_synth_csu_bac/chlpt"/>
</dbReference>
<dbReference type="InterPro" id="IPR000454">
    <property type="entry name" value="ATP_synth_F0_csu"/>
</dbReference>
<dbReference type="InterPro" id="IPR020537">
    <property type="entry name" value="ATP_synth_F0_csu_DDCD_BS"/>
</dbReference>
<dbReference type="InterPro" id="IPR038662">
    <property type="entry name" value="ATP_synth_F0_csu_sf"/>
</dbReference>
<dbReference type="InterPro" id="IPR002379">
    <property type="entry name" value="ATPase_proteolipid_c-like_dom"/>
</dbReference>
<dbReference type="InterPro" id="IPR035921">
    <property type="entry name" value="F/V-ATP_Csub_sf"/>
</dbReference>
<dbReference type="NCBIfam" id="TIGR01260">
    <property type="entry name" value="ATP_synt_c"/>
    <property type="match status" value="1"/>
</dbReference>
<dbReference type="NCBIfam" id="NF005608">
    <property type="entry name" value="PRK07354.1"/>
    <property type="match status" value="1"/>
</dbReference>
<dbReference type="PANTHER" id="PTHR10031">
    <property type="entry name" value="ATP SYNTHASE LIPID-BINDING PROTEIN, MITOCHONDRIAL"/>
    <property type="match status" value="1"/>
</dbReference>
<dbReference type="PANTHER" id="PTHR10031:SF0">
    <property type="entry name" value="ATPASE PROTEIN 9"/>
    <property type="match status" value="1"/>
</dbReference>
<dbReference type="Pfam" id="PF00137">
    <property type="entry name" value="ATP-synt_C"/>
    <property type="match status" value="1"/>
</dbReference>
<dbReference type="PRINTS" id="PR00124">
    <property type="entry name" value="ATPASEC"/>
</dbReference>
<dbReference type="SUPFAM" id="SSF81333">
    <property type="entry name" value="F1F0 ATP synthase subunit C"/>
    <property type="match status" value="1"/>
</dbReference>
<dbReference type="PROSITE" id="PS00605">
    <property type="entry name" value="ATPASE_C"/>
    <property type="match status" value="1"/>
</dbReference>
<organism>
    <name type="scientific">Populus trichocarpa</name>
    <name type="common">Western balsam poplar</name>
    <name type="synonym">Populus balsamifera subsp. trichocarpa</name>
    <dbReference type="NCBI Taxonomy" id="3694"/>
    <lineage>
        <taxon>Eukaryota</taxon>
        <taxon>Viridiplantae</taxon>
        <taxon>Streptophyta</taxon>
        <taxon>Embryophyta</taxon>
        <taxon>Tracheophyta</taxon>
        <taxon>Spermatophyta</taxon>
        <taxon>Magnoliopsida</taxon>
        <taxon>eudicotyledons</taxon>
        <taxon>Gunneridae</taxon>
        <taxon>Pentapetalae</taxon>
        <taxon>rosids</taxon>
        <taxon>fabids</taxon>
        <taxon>Malpighiales</taxon>
        <taxon>Salicaceae</taxon>
        <taxon>Saliceae</taxon>
        <taxon>Populus</taxon>
    </lineage>
</organism>
<gene>
    <name evidence="1" type="primary">atpH</name>
    <name type="ordered locus">Poptr_cp007</name>
</gene>
<sequence>MNPLISAASVIAAGLAVGLASIGPGVGQGTAAGQAVEGIARQPEAEGKIRGTLLLSLAFMEALTIYGLVVALALLFANPFV</sequence>
<keyword id="KW-0066">ATP synthesis</keyword>
<keyword id="KW-0138">CF(0)</keyword>
<keyword id="KW-0150">Chloroplast</keyword>
<keyword id="KW-0375">Hydrogen ion transport</keyword>
<keyword id="KW-0406">Ion transport</keyword>
<keyword id="KW-0446">Lipid-binding</keyword>
<keyword id="KW-0472">Membrane</keyword>
<keyword id="KW-0934">Plastid</keyword>
<keyword id="KW-1185">Reference proteome</keyword>
<keyword id="KW-0793">Thylakoid</keyword>
<keyword id="KW-0812">Transmembrane</keyword>
<keyword id="KW-1133">Transmembrane helix</keyword>
<keyword id="KW-0813">Transport</keyword>
<name>ATPH_POPTR</name>
<proteinExistence type="inferred from homology"/>
<reference key="1">
    <citation type="journal article" date="2006" name="Science">
        <title>The genome of black cottonwood, Populus trichocarpa (Torr. &amp; Gray).</title>
        <authorList>
            <person name="Tuskan G.A."/>
            <person name="Difazio S."/>
            <person name="Jansson S."/>
            <person name="Bohlmann J."/>
            <person name="Grigoriev I."/>
            <person name="Hellsten U."/>
            <person name="Putnam N."/>
            <person name="Ralph S."/>
            <person name="Rombauts S."/>
            <person name="Salamov A."/>
            <person name="Schein J."/>
            <person name="Sterck L."/>
            <person name="Aerts A."/>
            <person name="Bhalerao R.R."/>
            <person name="Bhalerao R.P."/>
            <person name="Blaudez D."/>
            <person name="Boerjan W."/>
            <person name="Brun A."/>
            <person name="Brunner A."/>
            <person name="Busov V."/>
            <person name="Campbell M."/>
            <person name="Carlson J."/>
            <person name="Chalot M."/>
            <person name="Chapman J."/>
            <person name="Chen G.-L."/>
            <person name="Cooper D."/>
            <person name="Coutinho P.M."/>
            <person name="Couturier J."/>
            <person name="Covert S."/>
            <person name="Cronk Q."/>
            <person name="Cunningham R."/>
            <person name="Davis J."/>
            <person name="Degroeve S."/>
            <person name="Dejardin A."/>
            <person name="dePamphilis C.W."/>
            <person name="Detter J."/>
            <person name="Dirks B."/>
            <person name="Dubchak I."/>
            <person name="Duplessis S."/>
            <person name="Ehlting J."/>
            <person name="Ellis B."/>
            <person name="Gendler K."/>
            <person name="Goodstein D."/>
            <person name="Gribskov M."/>
            <person name="Grimwood J."/>
            <person name="Groover A."/>
            <person name="Gunter L."/>
            <person name="Hamberger B."/>
            <person name="Heinze B."/>
            <person name="Helariutta Y."/>
            <person name="Henrissat B."/>
            <person name="Holligan D."/>
            <person name="Holt R."/>
            <person name="Huang W."/>
            <person name="Islam-Faridi N."/>
            <person name="Jones S."/>
            <person name="Jones-Rhoades M."/>
            <person name="Jorgensen R."/>
            <person name="Joshi C."/>
            <person name="Kangasjaervi J."/>
            <person name="Karlsson J."/>
            <person name="Kelleher C."/>
            <person name="Kirkpatrick R."/>
            <person name="Kirst M."/>
            <person name="Kohler A."/>
            <person name="Kalluri U."/>
            <person name="Larimer F."/>
            <person name="Leebens-Mack J."/>
            <person name="Leple J.-C."/>
            <person name="Locascio P."/>
            <person name="Lou Y."/>
            <person name="Lucas S."/>
            <person name="Martin F."/>
            <person name="Montanini B."/>
            <person name="Napoli C."/>
            <person name="Nelson D.R."/>
            <person name="Nelson C."/>
            <person name="Nieminen K."/>
            <person name="Nilsson O."/>
            <person name="Pereda V."/>
            <person name="Peter G."/>
            <person name="Philippe R."/>
            <person name="Pilate G."/>
            <person name="Poliakov A."/>
            <person name="Razumovskaya J."/>
            <person name="Richardson P."/>
            <person name="Rinaldi C."/>
            <person name="Ritland K."/>
            <person name="Rouze P."/>
            <person name="Ryaboy D."/>
            <person name="Schmutz J."/>
            <person name="Schrader J."/>
            <person name="Segerman B."/>
            <person name="Shin H."/>
            <person name="Siddiqui A."/>
            <person name="Sterky F."/>
            <person name="Terry A."/>
            <person name="Tsai C.-J."/>
            <person name="Uberbacher E."/>
            <person name="Unneberg P."/>
            <person name="Vahala J."/>
            <person name="Wall K."/>
            <person name="Wessler S."/>
            <person name="Yang G."/>
            <person name="Yin T."/>
            <person name="Douglas C."/>
            <person name="Marra M."/>
            <person name="Sandberg G."/>
            <person name="Van de Peer Y."/>
            <person name="Rokhsar D.S."/>
        </authorList>
    </citation>
    <scope>NUCLEOTIDE SEQUENCE [LARGE SCALE GENOMIC DNA]</scope>
    <source>
        <strain>cv. Nisqually</strain>
    </source>
</reference>
<comment type="function">
    <text evidence="1">F(1)F(0) ATP synthase produces ATP from ADP in the presence of a proton or sodium gradient. F-type ATPases consist of two structural domains, F(1) containing the extramembraneous catalytic core and F(0) containing the membrane proton channel, linked together by a central stalk and a peripheral stalk. During catalysis, ATP synthesis in the catalytic domain of F(1) is coupled via a rotary mechanism of the central stalk subunits to proton translocation.</text>
</comment>
<comment type="function">
    <text evidence="1">Key component of the F(0) channel; it plays a direct role in translocation across the membrane. A homomeric c-ring of between 10-14 subunits forms the central stalk rotor element with the F(1) delta and epsilon subunits.</text>
</comment>
<comment type="subunit">
    <text evidence="1">F-type ATPases have 2 components, F(1) - the catalytic core - and F(0) - the membrane proton channel. F(1) has five subunits: alpha(3), beta(3), gamma(1), delta(1), epsilon(1). F(0) has four main subunits: a(1), b(1), b'(1) and c(10-14). The alpha and beta chains form an alternating ring which encloses part of the gamma chain. F(1) is attached to F(0) by a central stalk formed by the gamma and epsilon chains, while a peripheral stalk is formed by the delta, b and b' chains.</text>
</comment>
<comment type="subcellular location">
    <subcellularLocation>
        <location evidence="1">Plastid</location>
        <location evidence="1">Chloroplast thylakoid membrane</location>
        <topology evidence="1">Multi-pass membrane protein</topology>
    </subcellularLocation>
</comment>
<comment type="miscellaneous">
    <text>In plastids the F-type ATPase is also known as CF(1)CF(0).</text>
</comment>
<comment type="similarity">
    <text evidence="1">Belongs to the ATPase C chain family.</text>
</comment>
<accession>A4GYP5</accession>
<evidence type="ECO:0000255" key="1">
    <source>
        <dbReference type="HAMAP-Rule" id="MF_01396"/>
    </source>
</evidence>
<geneLocation type="chloroplast"/>